<name>RSLBB_HUMAN</name>
<organism>
    <name type="scientific">Homo sapiens</name>
    <name type="common">Human</name>
    <dbReference type="NCBI Taxonomy" id="9606"/>
    <lineage>
        <taxon>Eukaryota</taxon>
        <taxon>Metazoa</taxon>
        <taxon>Chordata</taxon>
        <taxon>Craniata</taxon>
        <taxon>Vertebrata</taxon>
        <taxon>Euteleostomi</taxon>
        <taxon>Mammalia</taxon>
        <taxon>Eutheria</taxon>
        <taxon>Euarchontoglires</taxon>
        <taxon>Primates</taxon>
        <taxon>Haplorrhini</taxon>
        <taxon>Catarrhini</taxon>
        <taxon>Hominidae</taxon>
        <taxon>Homo</taxon>
    </lineage>
</organism>
<gene>
    <name evidence="8" type="primary">RASL11B</name>
</gene>
<feature type="chain" id="PRO_0000308365" description="Ras-like protein family member 11B">
    <location>
        <begin position="1"/>
        <end position="248"/>
    </location>
</feature>
<feature type="region of interest" description="Small GTPase-like">
    <location>
        <begin position="29"/>
        <end position="246"/>
    </location>
</feature>
<feature type="region of interest" description="Disordered" evidence="4">
    <location>
        <begin position="205"/>
        <end position="226"/>
    </location>
</feature>
<feature type="binding site" evidence="2">
    <location>
        <begin position="40"/>
        <end position="47"/>
    </location>
    <ligand>
        <name>GTP</name>
        <dbReference type="ChEBI" id="CHEBI:37565"/>
    </ligand>
</feature>
<feature type="binding site" evidence="2">
    <location>
        <begin position="87"/>
        <end position="94"/>
    </location>
    <ligand>
        <name>GTP</name>
        <dbReference type="ChEBI" id="CHEBI:37565"/>
    </ligand>
</feature>
<feature type="binding site" evidence="2">
    <location>
        <begin position="152"/>
        <end position="155"/>
    </location>
    <ligand>
        <name>GTP</name>
        <dbReference type="ChEBI" id="CHEBI:37565"/>
    </ligand>
</feature>
<feature type="sequence conflict" description="In Ref. 2; BAB55008." evidence="6" ref="2">
    <original>L</original>
    <variation>H</variation>
    <location>
        <position position="3"/>
    </location>
</feature>
<feature type="sequence conflict" description="In Ref. 2; BAB55008." evidence="6" ref="2">
    <original>V</original>
    <variation>L</variation>
    <location>
        <position position="50"/>
    </location>
</feature>
<evidence type="ECO:0000250" key="1">
    <source>
        <dbReference type="UniProtKB" id="P01116"/>
    </source>
</evidence>
<evidence type="ECO:0000250" key="2">
    <source>
        <dbReference type="UniProtKB" id="Q96A58"/>
    </source>
</evidence>
<evidence type="ECO:0000255" key="3"/>
<evidence type="ECO:0000256" key="4">
    <source>
        <dbReference type="SAM" id="MobiDB-lite"/>
    </source>
</evidence>
<evidence type="ECO:0000269" key="5">
    <source>
    </source>
</evidence>
<evidence type="ECO:0000305" key="6"/>
<evidence type="ECO:0000312" key="7">
    <source>
        <dbReference type="EMBL" id="AAH01087.1"/>
    </source>
</evidence>
<evidence type="ECO:0000312" key="8">
    <source>
        <dbReference type="EMBL" id="AAH01846.1"/>
    </source>
</evidence>
<evidence type="ECO:0000312" key="9">
    <source>
        <dbReference type="EMBL" id="AAH25694.1"/>
    </source>
</evidence>
<evidence type="ECO:0000312" key="10">
    <source>
        <dbReference type="EMBL" id="AAX46798.1"/>
    </source>
</evidence>
<evidence type="ECO:0000312" key="11">
    <source>
        <dbReference type="EMBL" id="BAB55008.1"/>
    </source>
</evidence>
<evidence type="ECO:0000312" key="12">
    <source>
        <dbReference type="EMBL" id="DAA02135.1"/>
    </source>
</evidence>
<evidence type="ECO:0000312" key="13">
    <source>
        <dbReference type="EMBL" id="EAX05441.1"/>
    </source>
</evidence>
<accession>Q9BPW5</accession>
<accession>B2RC51</accession>
<accession>Q96KC5</accession>
<keyword id="KW-0342">GTP-binding</keyword>
<keyword id="KW-0378">Hydrolase</keyword>
<keyword id="KW-0547">Nucleotide-binding</keyword>
<keyword id="KW-1267">Proteomics identification</keyword>
<keyword id="KW-1185">Reference proteome</keyword>
<protein>
    <recommendedName>
        <fullName>Ras-like protein family member 11B</fullName>
        <ecNumber evidence="1">3.6.5.2</ecNumber>
    </recommendedName>
</protein>
<proteinExistence type="evidence at protein level"/>
<reference evidence="6 10" key="1">
    <citation type="journal article" date="2007" name="Biochim. Biophys. Acta">
        <title>Cloning, genomic organization, and tissue-specific expression of the RASL11B gene.</title>
        <authorList>
            <person name="Stolle K."/>
            <person name="Schnoor M."/>
            <person name="Fuellen G."/>
            <person name="Spitzer M."/>
            <person name="Cullen P."/>
            <person name="Lorkowski S."/>
        </authorList>
    </citation>
    <scope>NUCLEOTIDE SEQUENCE [MRNA]</scope>
    <scope>TISSUE SPECIFICITY</scope>
    <scope>DEVELOPMENTAL STAGE</scope>
    <scope>INDUCTION</scope>
</reference>
<reference evidence="11" key="2">
    <citation type="journal article" date="2004" name="Nat. Genet.">
        <title>Complete sequencing and characterization of 21,243 full-length human cDNAs.</title>
        <authorList>
            <person name="Ota T."/>
            <person name="Suzuki Y."/>
            <person name="Nishikawa T."/>
            <person name="Otsuki T."/>
            <person name="Sugiyama T."/>
            <person name="Irie R."/>
            <person name="Wakamatsu A."/>
            <person name="Hayashi K."/>
            <person name="Sato H."/>
            <person name="Nagai K."/>
            <person name="Kimura K."/>
            <person name="Makita H."/>
            <person name="Sekine M."/>
            <person name="Obayashi M."/>
            <person name="Nishi T."/>
            <person name="Shibahara T."/>
            <person name="Tanaka T."/>
            <person name="Ishii S."/>
            <person name="Yamamoto J."/>
            <person name="Saito K."/>
            <person name="Kawai Y."/>
            <person name="Isono Y."/>
            <person name="Nakamura Y."/>
            <person name="Nagahari K."/>
            <person name="Murakami K."/>
            <person name="Yasuda T."/>
            <person name="Iwayanagi T."/>
            <person name="Wagatsuma M."/>
            <person name="Shiratori A."/>
            <person name="Sudo H."/>
            <person name="Hosoiri T."/>
            <person name="Kaku Y."/>
            <person name="Kodaira H."/>
            <person name="Kondo H."/>
            <person name="Sugawara M."/>
            <person name="Takahashi M."/>
            <person name="Kanda K."/>
            <person name="Yokoi T."/>
            <person name="Furuya T."/>
            <person name="Kikkawa E."/>
            <person name="Omura Y."/>
            <person name="Abe K."/>
            <person name="Kamihara K."/>
            <person name="Katsuta N."/>
            <person name="Sato K."/>
            <person name="Tanikawa M."/>
            <person name="Yamazaki M."/>
            <person name="Ninomiya K."/>
            <person name="Ishibashi T."/>
            <person name="Yamashita H."/>
            <person name="Murakawa K."/>
            <person name="Fujimori K."/>
            <person name="Tanai H."/>
            <person name="Kimata M."/>
            <person name="Watanabe M."/>
            <person name="Hiraoka S."/>
            <person name="Chiba Y."/>
            <person name="Ishida S."/>
            <person name="Ono Y."/>
            <person name="Takiguchi S."/>
            <person name="Watanabe S."/>
            <person name="Yosida M."/>
            <person name="Hotuta T."/>
            <person name="Kusano J."/>
            <person name="Kanehori K."/>
            <person name="Takahashi-Fujii A."/>
            <person name="Hara H."/>
            <person name="Tanase T.-O."/>
            <person name="Nomura Y."/>
            <person name="Togiya S."/>
            <person name="Komai F."/>
            <person name="Hara R."/>
            <person name="Takeuchi K."/>
            <person name="Arita M."/>
            <person name="Imose N."/>
            <person name="Musashino K."/>
            <person name="Yuuki H."/>
            <person name="Oshima A."/>
            <person name="Sasaki N."/>
            <person name="Aotsuka S."/>
            <person name="Yoshikawa Y."/>
            <person name="Matsunawa H."/>
            <person name="Ichihara T."/>
            <person name="Shiohata N."/>
            <person name="Sano S."/>
            <person name="Moriya S."/>
            <person name="Momiyama H."/>
            <person name="Satoh N."/>
            <person name="Takami S."/>
            <person name="Terashima Y."/>
            <person name="Suzuki O."/>
            <person name="Nakagawa S."/>
            <person name="Senoh A."/>
            <person name="Mizoguchi H."/>
            <person name="Goto Y."/>
            <person name="Shimizu F."/>
            <person name="Wakebe H."/>
            <person name="Hishigaki H."/>
            <person name="Watanabe T."/>
            <person name="Sugiyama A."/>
            <person name="Takemoto M."/>
            <person name="Kawakami B."/>
            <person name="Yamazaki M."/>
            <person name="Watanabe K."/>
            <person name="Kumagai A."/>
            <person name="Itakura S."/>
            <person name="Fukuzumi Y."/>
            <person name="Fujimori Y."/>
            <person name="Komiyama M."/>
            <person name="Tashiro H."/>
            <person name="Tanigami A."/>
            <person name="Fujiwara T."/>
            <person name="Ono T."/>
            <person name="Yamada K."/>
            <person name="Fujii Y."/>
            <person name="Ozaki K."/>
            <person name="Hirao M."/>
            <person name="Ohmori Y."/>
            <person name="Kawabata A."/>
            <person name="Hikiji T."/>
            <person name="Kobatake N."/>
            <person name="Inagaki H."/>
            <person name="Ikema Y."/>
            <person name="Okamoto S."/>
            <person name="Okitani R."/>
            <person name="Kawakami T."/>
            <person name="Noguchi S."/>
            <person name="Itoh T."/>
            <person name="Shigeta K."/>
            <person name="Senba T."/>
            <person name="Matsumura K."/>
            <person name="Nakajima Y."/>
            <person name="Mizuno T."/>
            <person name="Morinaga M."/>
            <person name="Sasaki M."/>
            <person name="Togashi T."/>
            <person name="Oyama M."/>
            <person name="Hata H."/>
            <person name="Watanabe M."/>
            <person name="Komatsu T."/>
            <person name="Mizushima-Sugano J."/>
            <person name="Satoh T."/>
            <person name="Shirai Y."/>
            <person name="Takahashi Y."/>
            <person name="Nakagawa K."/>
            <person name="Okumura K."/>
            <person name="Nagase T."/>
            <person name="Nomura N."/>
            <person name="Kikuchi H."/>
            <person name="Masuho Y."/>
            <person name="Yamashita R."/>
            <person name="Nakai K."/>
            <person name="Yada T."/>
            <person name="Nakamura Y."/>
            <person name="Ohara O."/>
            <person name="Isogai T."/>
            <person name="Sugano S."/>
        </authorList>
    </citation>
    <scope>NUCLEOTIDE SEQUENCE [LARGE SCALE MRNA]</scope>
    <source>
        <tissue>Brain</tissue>
        <tissue evidence="11">Embryo</tissue>
    </source>
</reference>
<reference evidence="13" key="3">
    <citation type="submission" date="2005-07" db="EMBL/GenBank/DDBJ databases">
        <authorList>
            <person name="Mural R.J."/>
            <person name="Istrail S."/>
            <person name="Sutton G.G."/>
            <person name="Florea L."/>
            <person name="Halpern A.L."/>
            <person name="Mobarry C.M."/>
            <person name="Lippert R."/>
            <person name="Walenz B."/>
            <person name="Shatkay H."/>
            <person name="Dew I."/>
            <person name="Miller J.R."/>
            <person name="Flanigan M.J."/>
            <person name="Edwards N.J."/>
            <person name="Bolanos R."/>
            <person name="Fasulo D."/>
            <person name="Halldorsson B.V."/>
            <person name="Hannenhalli S."/>
            <person name="Turner R."/>
            <person name="Yooseph S."/>
            <person name="Lu F."/>
            <person name="Nusskern D.R."/>
            <person name="Shue B.C."/>
            <person name="Zheng X.H."/>
            <person name="Zhong F."/>
            <person name="Delcher A.L."/>
            <person name="Huson D.H."/>
            <person name="Kravitz S.A."/>
            <person name="Mouchard L."/>
            <person name="Reinert K."/>
            <person name="Remington K.A."/>
            <person name="Clark A.G."/>
            <person name="Waterman M.S."/>
            <person name="Eichler E.E."/>
            <person name="Adams M.D."/>
            <person name="Hunkapiller M.W."/>
            <person name="Myers E.W."/>
            <person name="Venter J.C."/>
        </authorList>
    </citation>
    <scope>NUCLEOTIDE SEQUENCE [LARGE SCALE GENOMIC DNA]</scope>
</reference>
<reference evidence="7" key="4">
    <citation type="journal article" date="2004" name="Genome Res.">
        <title>The status, quality, and expansion of the NIH full-length cDNA project: the Mammalian Gene Collection (MGC).</title>
        <authorList>
            <consortium name="The MGC Project Team"/>
        </authorList>
    </citation>
    <scope>NUCLEOTIDE SEQUENCE [LARGE SCALE MRNA]</scope>
    <source>
        <tissue evidence="9">Lung</tissue>
        <tissue evidence="7">Muscle</tissue>
    </source>
</reference>
<reference evidence="6 12" key="5">
    <citation type="journal article" date="2004" name="Biochem. Biophys. Res. Commun.">
        <title>Rasl11a, member of a novel small monomeric GTPase gene family, is differentially expressed in prostate tumors.</title>
        <authorList>
            <person name="Louro R."/>
            <person name="Nakaya H.I."/>
            <person name="Paquola A.C.M."/>
            <person name="Martins E.A.L."/>
            <person name="da Silva A.M."/>
            <person name="Verjovski-Almeida S."/>
            <person name="Reis E.M."/>
        </authorList>
    </citation>
    <scope>IDENTIFICATION</scope>
</reference>
<comment type="catalytic activity">
    <reaction evidence="1">
        <text>GTP + H2O = GDP + phosphate + H(+)</text>
        <dbReference type="Rhea" id="RHEA:19669"/>
        <dbReference type="ChEBI" id="CHEBI:15377"/>
        <dbReference type="ChEBI" id="CHEBI:15378"/>
        <dbReference type="ChEBI" id="CHEBI:37565"/>
        <dbReference type="ChEBI" id="CHEBI:43474"/>
        <dbReference type="ChEBI" id="CHEBI:58189"/>
        <dbReference type="EC" id="3.6.5.2"/>
    </reaction>
</comment>
<comment type="interaction">
    <interactant intactId="EBI-745409">
        <id>Q9BPW5</id>
    </interactant>
    <interactant intactId="EBI-752301">
        <id>Q8WXD5</id>
        <label>GEMIN6</label>
    </interactant>
    <organismsDiffer>false</organismsDiffer>
    <experiments>3</experiments>
</comment>
<comment type="interaction">
    <interactant intactId="EBI-745409">
        <id>Q9BPW5</id>
    </interactant>
    <interactant intactId="EBI-8769674">
        <id>Q96QZ7-3</id>
        <label>MAGI1</label>
    </interactant>
    <organismsDiffer>false</organismsDiffer>
    <experiments>3</experiments>
</comment>
<comment type="tissue specificity">
    <text evidence="5">Widely expressed with highest levels in placenta and primary macrophages.</text>
</comment>
<comment type="developmental stage">
    <text evidence="5">Up-regulated during development of primary monocytes into macrophages.</text>
</comment>
<comment type="induction">
    <text evidence="5">By TGFB1.</text>
</comment>
<comment type="similarity">
    <text evidence="3">Belongs to the small GTPase superfamily. Ras family.</text>
</comment>
<comment type="online information" name="Atlas of Genetics and Cytogenetics in Oncology and Haematology">
    <link uri="https://atlasgeneticsoncology.org/gene/44265/RASL11B"/>
</comment>
<dbReference type="EC" id="3.6.5.2" evidence="1"/>
<dbReference type="EMBL" id="AY839725">
    <property type="protein sequence ID" value="AAX46798.1"/>
    <property type="molecule type" value="mRNA"/>
</dbReference>
<dbReference type="EMBL" id="AK027267">
    <property type="protein sequence ID" value="BAB55008.1"/>
    <property type="molecule type" value="mRNA"/>
</dbReference>
<dbReference type="EMBL" id="AK314942">
    <property type="protein sequence ID" value="BAG37448.1"/>
    <property type="molecule type" value="mRNA"/>
</dbReference>
<dbReference type="EMBL" id="CH471057">
    <property type="protein sequence ID" value="EAX05441.1"/>
    <property type="molecule type" value="Genomic_DNA"/>
</dbReference>
<dbReference type="EMBL" id="BC001087">
    <property type="protein sequence ID" value="AAH01087.1"/>
    <property type="molecule type" value="mRNA"/>
</dbReference>
<dbReference type="EMBL" id="BC001846">
    <property type="protein sequence ID" value="AAH01846.1"/>
    <property type="molecule type" value="mRNA"/>
</dbReference>
<dbReference type="EMBL" id="BC025694">
    <property type="protein sequence ID" value="AAH25694.1"/>
    <property type="molecule type" value="mRNA"/>
</dbReference>
<dbReference type="EMBL" id="BK001672">
    <property type="protein sequence ID" value="DAA02135.1"/>
    <property type="molecule type" value="mRNA"/>
</dbReference>
<dbReference type="CCDS" id="CCDS3490.1"/>
<dbReference type="RefSeq" id="NP_076429.1">
    <property type="nucleotide sequence ID" value="NM_023940.3"/>
</dbReference>
<dbReference type="SMR" id="Q9BPW5"/>
<dbReference type="BioGRID" id="122444">
    <property type="interactions" value="21"/>
</dbReference>
<dbReference type="FunCoup" id="Q9BPW5">
    <property type="interactions" value="347"/>
</dbReference>
<dbReference type="IntAct" id="Q9BPW5">
    <property type="interactions" value="11"/>
</dbReference>
<dbReference type="STRING" id="9606.ENSP00000248706"/>
<dbReference type="iPTMnet" id="Q9BPW5"/>
<dbReference type="PhosphoSitePlus" id="Q9BPW5"/>
<dbReference type="BioMuta" id="RASL11B"/>
<dbReference type="DMDM" id="74732795"/>
<dbReference type="MassIVE" id="Q9BPW5"/>
<dbReference type="PaxDb" id="9606-ENSP00000248706"/>
<dbReference type="PeptideAtlas" id="Q9BPW5"/>
<dbReference type="ProteomicsDB" id="78580"/>
<dbReference type="Antibodypedia" id="23900">
    <property type="antibodies" value="93 antibodies from 24 providers"/>
</dbReference>
<dbReference type="DNASU" id="65997"/>
<dbReference type="Ensembl" id="ENST00000248706.5">
    <property type="protein sequence ID" value="ENSP00000248706.3"/>
    <property type="gene ID" value="ENSG00000128045.7"/>
</dbReference>
<dbReference type="GeneID" id="65997"/>
<dbReference type="KEGG" id="hsa:65997"/>
<dbReference type="MANE-Select" id="ENST00000248706.5">
    <property type="protein sequence ID" value="ENSP00000248706.3"/>
    <property type="RefSeq nucleotide sequence ID" value="NM_023940.3"/>
    <property type="RefSeq protein sequence ID" value="NP_076429.1"/>
</dbReference>
<dbReference type="UCSC" id="uc003gzt.4">
    <property type="organism name" value="human"/>
</dbReference>
<dbReference type="AGR" id="HGNC:23804"/>
<dbReference type="CTD" id="65997"/>
<dbReference type="DisGeNET" id="65997"/>
<dbReference type="GeneCards" id="RASL11B"/>
<dbReference type="HGNC" id="HGNC:23804">
    <property type="gene designation" value="RASL11B"/>
</dbReference>
<dbReference type="HPA" id="ENSG00000128045">
    <property type="expression patterns" value="Tissue enhanced (lymphoid tissue, ovary)"/>
</dbReference>
<dbReference type="MIM" id="612404">
    <property type="type" value="gene"/>
</dbReference>
<dbReference type="neXtProt" id="NX_Q9BPW5"/>
<dbReference type="OpenTargets" id="ENSG00000128045"/>
<dbReference type="PharmGKB" id="PA134872992"/>
<dbReference type="VEuPathDB" id="HostDB:ENSG00000128045"/>
<dbReference type="eggNOG" id="KOG0395">
    <property type="taxonomic scope" value="Eukaryota"/>
</dbReference>
<dbReference type="GeneTree" id="ENSGT00940000158643"/>
<dbReference type="HOGENOM" id="CLU_041217_9_7_1"/>
<dbReference type="InParanoid" id="Q9BPW5"/>
<dbReference type="OMA" id="KEVEPQH"/>
<dbReference type="OrthoDB" id="18798at2759"/>
<dbReference type="PAN-GO" id="Q9BPW5">
    <property type="GO annotations" value="0 GO annotations based on evolutionary models"/>
</dbReference>
<dbReference type="PhylomeDB" id="Q9BPW5"/>
<dbReference type="TreeFam" id="TF318030"/>
<dbReference type="PathwayCommons" id="Q9BPW5"/>
<dbReference type="SignaLink" id="Q9BPW5"/>
<dbReference type="BioGRID-ORCS" id="65997">
    <property type="hits" value="10 hits in 1144 CRISPR screens"/>
</dbReference>
<dbReference type="ChiTaRS" id="RASL11B">
    <property type="organism name" value="human"/>
</dbReference>
<dbReference type="GeneWiki" id="RASL11B"/>
<dbReference type="GenomeRNAi" id="65997"/>
<dbReference type="Pharos" id="Q9BPW5">
    <property type="development level" value="Tbio"/>
</dbReference>
<dbReference type="PRO" id="PR:Q9BPW5"/>
<dbReference type="Proteomes" id="UP000005640">
    <property type="component" value="Chromosome 4"/>
</dbReference>
<dbReference type="RNAct" id="Q9BPW5">
    <property type="molecule type" value="protein"/>
</dbReference>
<dbReference type="Bgee" id="ENSG00000128045">
    <property type="expression patterns" value="Expressed in right ovary and 94 other cell types or tissues"/>
</dbReference>
<dbReference type="GO" id="GO:0003925">
    <property type="term" value="F:G protein activity"/>
    <property type="evidence" value="ECO:0007669"/>
    <property type="project" value="UniProtKB-EC"/>
</dbReference>
<dbReference type="GO" id="GO:0005525">
    <property type="term" value="F:GTP binding"/>
    <property type="evidence" value="ECO:0007669"/>
    <property type="project" value="UniProtKB-KW"/>
</dbReference>
<dbReference type="GO" id="GO:0005160">
    <property type="term" value="F:transforming growth factor beta receptor binding"/>
    <property type="evidence" value="ECO:0007669"/>
    <property type="project" value="Ensembl"/>
</dbReference>
<dbReference type="GO" id="GO:0030512">
    <property type="term" value="P:negative regulation of transforming growth factor beta receptor signaling pathway"/>
    <property type="evidence" value="ECO:0007669"/>
    <property type="project" value="Ensembl"/>
</dbReference>
<dbReference type="CDD" id="cd04146">
    <property type="entry name" value="RERG_RasL11_like"/>
    <property type="match status" value="1"/>
</dbReference>
<dbReference type="FunFam" id="3.40.50.300:FF:000718">
    <property type="entry name" value="Ras-like protein family member 11A"/>
    <property type="match status" value="1"/>
</dbReference>
<dbReference type="Gene3D" id="3.40.50.300">
    <property type="entry name" value="P-loop containing nucleotide triphosphate hydrolases"/>
    <property type="match status" value="1"/>
</dbReference>
<dbReference type="InterPro" id="IPR027417">
    <property type="entry name" value="P-loop_NTPase"/>
</dbReference>
<dbReference type="InterPro" id="IPR051065">
    <property type="entry name" value="Ras-related_GTPase"/>
</dbReference>
<dbReference type="InterPro" id="IPR005225">
    <property type="entry name" value="Small_GTP-bd"/>
</dbReference>
<dbReference type="InterPro" id="IPR001806">
    <property type="entry name" value="Small_GTPase"/>
</dbReference>
<dbReference type="NCBIfam" id="TIGR00231">
    <property type="entry name" value="small_GTP"/>
    <property type="match status" value="1"/>
</dbReference>
<dbReference type="PANTHER" id="PTHR45704">
    <property type="entry name" value="RAS-LIKE FAMILY MEMBER 11"/>
    <property type="match status" value="1"/>
</dbReference>
<dbReference type="Pfam" id="PF00071">
    <property type="entry name" value="Ras"/>
    <property type="match status" value="1"/>
</dbReference>
<dbReference type="PRINTS" id="PR00449">
    <property type="entry name" value="RASTRNSFRMNG"/>
</dbReference>
<dbReference type="SMART" id="SM00175">
    <property type="entry name" value="RAB"/>
    <property type="match status" value="1"/>
</dbReference>
<dbReference type="SMART" id="SM00173">
    <property type="entry name" value="RAS"/>
    <property type="match status" value="1"/>
</dbReference>
<dbReference type="SMART" id="SM00174">
    <property type="entry name" value="RHO"/>
    <property type="match status" value="1"/>
</dbReference>
<dbReference type="SUPFAM" id="SSF52540">
    <property type="entry name" value="P-loop containing nucleoside triphosphate hydrolases"/>
    <property type="match status" value="1"/>
</dbReference>
<dbReference type="PROSITE" id="PS51421">
    <property type="entry name" value="RAS"/>
    <property type="match status" value="1"/>
</dbReference>
<sequence length="248" mass="27508">MRLIQNMCTIAEYPAPGNAAASDCCVGAAGRRLVKIAVVGASGVGKTALVVRFLTKRFIGDYERNAGNLYTRQVQIEGETLALQVQDTPGIQVHENSLSCSEQLNRCIRWADAVVIVFSITDYKSYELISQLHQHVQQLHLGTRLPVVVVANKADLLHIKQVDPQLGLQLASMLGCSFYEVSVSENYNDVYSAFHVLCKEVSHKQQPSSTPEKRRTSLIPRPKSPNMQDLKRRFKQALSAKVRTVTSV</sequence>